<dbReference type="EC" id="7.1.2.2" evidence="1"/>
<dbReference type="EMBL" id="DQ291132">
    <property type="protein sequence ID" value="ABB81945.1"/>
    <property type="molecule type" value="Genomic_DNA"/>
</dbReference>
<dbReference type="RefSeq" id="YP_635877.1">
    <property type="nucleotide sequence ID" value="NC_008099.1"/>
</dbReference>
<dbReference type="SMR" id="Q20EW8"/>
<dbReference type="GeneID" id="4100137"/>
<dbReference type="GO" id="GO:0009535">
    <property type="term" value="C:chloroplast thylakoid membrane"/>
    <property type="evidence" value="ECO:0007669"/>
    <property type="project" value="UniProtKB-SubCell"/>
</dbReference>
<dbReference type="GO" id="GO:0005739">
    <property type="term" value="C:mitochondrion"/>
    <property type="evidence" value="ECO:0007669"/>
    <property type="project" value="GOC"/>
</dbReference>
<dbReference type="GO" id="GO:0045259">
    <property type="term" value="C:proton-transporting ATP synthase complex"/>
    <property type="evidence" value="ECO:0007669"/>
    <property type="project" value="UniProtKB-KW"/>
</dbReference>
<dbReference type="GO" id="GO:0005524">
    <property type="term" value="F:ATP binding"/>
    <property type="evidence" value="ECO:0007669"/>
    <property type="project" value="UniProtKB-UniRule"/>
</dbReference>
<dbReference type="GO" id="GO:0016887">
    <property type="term" value="F:ATP hydrolysis activity"/>
    <property type="evidence" value="ECO:0007669"/>
    <property type="project" value="InterPro"/>
</dbReference>
<dbReference type="GO" id="GO:0046933">
    <property type="term" value="F:proton-transporting ATP synthase activity, rotational mechanism"/>
    <property type="evidence" value="ECO:0007669"/>
    <property type="project" value="UniProtKB-UniRule"/>
</dbReference>
<dbReference type="GO" id="GO:0042776">
    <property type="term" value="P:proton motive force-driven mitochondrial ATP synthesis"/>
    <property type="evidence" value="ECO:0007669"/>
    <property type="project" value="TreeGrafter"/>
</dbReference>
<dbReference type="CDD" id="cd18110">
    <property type="entry name" value="ATP-synt_F1_beta_C"/>
    <property type="match status" value="1"/>
</dbReference>
<dbReference type="CDD" id="cd18115">
    <property type="entry name" value="ATP-synt_F1_beta_N"/>
    <property type="match status" value="1"/>
</dbReference>
<dbReference type="CDD" id="cd01133">
    <property type="entry name" value="F1-ATPase_beta_CD"/>
    <property type="match status" value="1"/>
</dbReference>
<dbReference type="FunFam" id="1.10.1140.10:FF:000001">
    <property type="entry name" value="ATP synthase subunit beta"/>
    <property type="match status" value="1"/>
</dbReference>
<dbReference type="FunFam" id="3.40.50.300:FF:000026">
    <property type="entry name" value="ATP synthase subunit beta"/>
    <property type="match status" value="1"/>
</dbReference>
<dbReference type="FunFam" id="2.40.10.170:FF:000002">
    <property type="entry name" value="ATP synthase subunit beta, chloroplastic"/>
    <property type="match status" value="1"/>
</dbReference>
<dbReference type="Gene3D" id="2.40.10.170">
    <property type="match status" value="1"/>
</dbReference>
<dbReference type="Gene3D" id="1.10.1140.10">
    <property type="entry name" value="Bovine Mitochondrial F1-atpase, Atp Synthase Beta Chain, Chain D, domain 3"/>
    <property type="match status" value="1"/>
</dbReference>
<dbReference type="Gene3D" id="3.40.50.300">
    <property type="entry name" value="P-loop containing nucleotide triphosphate hydrolases"/>
    <property type="match status" value="1"/>
</dbReference>
<dbReference type="HAMAP" id="MF_01347">
    <property type="entry name" value="ATP_synth_beta_bact"/>
    <property type="match status" value="1"/>
</dbReference>
<dbReference type="InterPro" id="IPR003593">
    <property type="entry name" value="AAA+_ATPase"/>
</dbReference>
<dbReference type="InterPro" id="IPR055190">
    <property type="entry name" value="ATP-synt_VA_C"/>
</dbReference>
<dbReference type="InterPro" id="IPR005722">
    <property type="entry name" value="ATP_synth_F1_bsu"/>
</dbReference>
<dbReference type="InterPro" id="IPR020003">
    <property type="entry name" value="ATPase_a/bsu_AS"/>
</dbReference>
<dbReference type="InterPro" id="IPR050053">
    <property type="entry name" value="ATPase_alpha/beta_chains"/>
</dbReference>
<dbReference type="InterPro" id="IPR004100">
    <property type="entry name" value="ATPase_F1/V1/A1_a/bsu_N"/>
</dbReference>
<dbReference type="InterPro" id="IPR036121">
    <property type="entry name" value="ATPase_F1/V1/A1_a/bsu_N_sf"/>
</dbReference>
<dbReference type="InterPro" id="IPR000194">
    <property type="entry name" value="ATPase_F1/V1/A1_a/bsu_nucl-bd"/>
</dbReference>
<dbReference type="InterPro" id="IPR024034">
    <property type="entry name" value="ATPase_F1/V1_b/a_C"/>
</dbReference>
<dbReference type="InterPro" id="IPR027417">
    <property type="entry name" value="P-loop_NTPase"/>
</dbReference>
<dbReference type="NCBIfam" id="TIGR01039">
    <property type="entry name" value="atpD"/>
    <property type="match status" value="1"/>
</dbReference>
<dbReference type="PANTHER" id="PTHR15184">
    <property type="entry name" value="ATP SYNTHASE"/>
    <property type="match status" value="1"/>
</dbReference>
<dbReference type="PANTHER" id="PTHR15184:SF71">
    <property type="entry name" value="ATP SYNTHASE SUBUNIT BETA, MITOCHONDRIAL"/>
    <property type="match status" value="1"/>
</dbReference>
<dbReference type="Pfam" id="PF00006">
    <property type="entry name" value="ATP-synt_ab"/>
    <property type="match status" value="1"/>
</dbReference>
<dbReference type="Pfam" id="PF02874">
    <property type="entry name" value="ATP-synt_ab_N"/>
    <property type="match status" value="1"/>
</dbReference>
<dbReference type="Pfam" id="PF22919">
    <property type="entry name" value="ATP-synt_VA_C"/>
    <property type="match status" value="1"/>
</dbReference>
<dbReference type="SMART" id="SM00382">
    <property type="entry name" value="AAA"/>
    <property type="match status" value="1"/>
</dbReference>
<dbReference type="SUPFAM" id="SSF47917">
    <property type="entry name" value="C-terminal domain of alpha and beta subunits of F1 ATP synthase"/>
    <property type="match status" value="1"/>
</dbReference>
<dbReference type="SUPFAM" id="SSF50615">
    <property type="entry name" value="N-terminal domain of alpha and beta subunits of F1 ATP synthase"/>
    <property type="match status" value="1"/>
</dbReference>
<dbReference type="SUPFAM" id="SSF52540">
    <property type="entry name" value="P-loop containing nucleoside triphosphate hydrolases"/>
    <property type="match status" value="1"/>
</dbReference>
<dbReference type="PROSITE" id="PS00152">
    <property type="entry name" value="ATPASE_ALPHA_BETA"/>
    <property type="match status" value="1"/>
</dbReference>
<proteinExistence type="inferred from homology"/>
<geneLocation type="chloroplast"/>
<feature type="chain" id="PRO_0000254504" description="ATP synthase subunit beta, chloroplastic">
    <location>
        <begin position="1"/>
        <end position="481"/>
    </location>
</feature>
<feature type="binding site" evidence="1">
    <location>
        <begin position="162"/>
        <end position="169"/>
    </location>
    <ligand>
        <name>ATP</name>
        <dbReference type="ChEBI" id="CHEBI:30616"/>
    </ligand>
</feature>
<reference key="1">
    <citation type="journal article" date="2006" name="BMC Biol.">
        <title>The complete chloroplast DNA sequence of the green alga Oltmannsiellopsis viridis reveals a distinctive quadripartite architecture in the chloroplast genome of early diverging ulvophytes.</title>
        <authorList>
            <person name="Pombert J.-F."/>
            <person name="Lemieux C."/>
            <person name="Turmel M."/>
        </authorList>
    </citation>
    <scope>NUCLEOTIDE SEQUENCE [LARGE SCALE GENOMIC DNA]</scope>
</reference>
<sequence length="481" mass="51501">MNVSVEAKNIGKVVQIIGPVLDVEFSADQMPNIYNAIVVEGENLAGTKVSVTCEVQQLLGDHCVRAVSMSATDGLMRGMDVVDTGAPLTVPVGTSTLGRIFNVLGEPVDNLGDVSNEGGLPIHRPAPLFVDLDTQLSIFKTGIKVVDLLAPYRRGGKIGLFGGAGVGKTVLIMELINNIAKAHGGVSVFGGVGERTREGNDLYAEMKESKVINEDNLSESKVALVYGQMNEPPGARMRVGLTALTMAEYFRDINKQDVLLFIDNIFRFVQAGSEVSALLGRMPSAVGYQPTLATEMGGLQERITSTKDGSITSIQAVYVPADDLTDPAPATTFAHLDATTVLSRNLAAKGIYPAVDPLDSTSTMLQPQTLGEEHYGCAQAVKTTLQRYKELQDIIAILGLDELSDEDRLVVARARKIERFLSQPFFVAEVFTGSPGKYVSLSETIQGFSQILTGELDDLPEQSFYLVGNLDEAIAKAATLG</sequence>
<name>ATPB_OLTVI</name>
<organism>
    <name type="scientific">Oltmannsiellopsis viridis</name>
    <name type="common">Marine flagellate</name>
    <name type="synonym">Oltmannsiella viridis</name>
    <dbReference type="NCBI Taxonomy" id="51324"/>
    <lineage>
        <taxon>Eukaryota</taxon>
        <taxon>Viridiplantae</taxon>
        <taxon>Chlorophyta</taxon>
        <taxon>Ulvophyceae</taxon>
        <taxon>Oltmannsiellopsidales</taxon>
        <taxon>Oltmannsiellopsidaceae</taxon>
        <taxon>Oltmannsiellopsis</taxon>
    </lineage>
</organism>
<accession>Q20EW8</accession>
<keyword id="KW-0066">ATP synthesis</keyword>
<keyword id="KW-0067">ATP-binding</keyword>
<keyword id="KW-0139">CF(1)</keyword>
<keyword id="KW-0150">Chloroplast</keyword>
<keyword id="KW-0375">Hydrogen ion transport</keyword>
<keyword id="KW-0406">Ion transport</keyword>
<keyword id="KW-0472">Membrane</keyword>
<keyword id="KW-0547">Nucleotide-binding</keyword>
<keyword id="KW-0934">Plastid</keyword>
<keyword id="KW-0793">Thylakoid</keyword>
<keyword id="KW-1278">Translocase</keyword>
<keyword id="KW-0813">Transport</keyword>
<evidence type="ECO:0000255" key="1">
    <source>
        <dbReference type="HAMAP-Rule" id="MF_01347"/>
    </source>
</evidence>
<protein>
    <recommendedName>
        <fullName evidence="1">ATP synthase subunit beta, chloroplastic</fullName>
        <ecNumber evidence="1">7.1.2.2</ecNumber>
    </recommendedName>
    <alternativeName>
        <fullName evidence="1">ATP synthase F1 sector subunit beta</fullName>
    </alternativeName>
    <alternativeName>
        <fullName evidence="1">F-ATPase subunit beta</fullName>
    </alternativeName>
</protein>
<gene>
    <name evidence="1" type="primary">atpB</name>
</gene>
<comment type="function">
    <text evidence="1">Produces ATP from ADP in the presence of a proton gradient across the membrane. The catalytic sites are hosted primarily by the beta subunits.</text>
</comment>
<comment type="catalytic activity">
    <reaction evidence="1">
        <text>ATP + H2O + 4 H(+)(in) = ADP + phosphate + 5 H(+)(out)</text>
        <dbReference type="Rhea" id="RHEA:57720"/>
        <dbReference type="ChEBI" id="CHEBI:15377"/>
        <dbReference type="ChEBI" id="CHEBI:15378"/>
        <dbReference type="ChEBI" id="CHEBI:30616"/>
        <dbReference type="ChEBI" id="CHEBI:43474"/>
        <dbReference type="ChEBI" id="CHEBI:456216"/>
        <dbReference type="EC" id="7.1.2.2"/>
    </reaction>
</comment>
<comment type="subunit">
    <text evidence="1">F-type ATPases have 2 components, CF(1) - the catalytic core - and CF(0) - the membrane proton channel. CF(1) has five subunits: alpha(3), beta(3), gamma(1), delta(1), epsilon(1). CF(0) has four main subunits: a(1), b(1), b'(1) and c(9-12).</text>
</comment>
<comment type="subcellular location">
    <subcellularLocation>
        <location evidence="1">Plastid</location>
        <location evidence="1">Chloroplast thylakoid membrane</location>
        <topology evidence="1">Peripheral membrane protein</topology>
    </subcellularLocation>
</comment>
<comment type="similarity">
    <text evidence="1">Belongs to the ATPase alpha/beta chains family.</text>
</comment>